<keyword id="KW-0004">4Fe-4S</keyword>
<keyword id="KW-0025">Alternative splicing</keyword>
<keyword id="KW-0067">ATP-binding</keyword>
<keyword id="KW-0408">Iron</keyword>
<keyword id="KW-0411">Iron-sulfur</keyword>
<keyword id="KW-0472">Membrane</keyword>
<keyword id="KW-0479">Metal-binding</keyword>
<keyword id="KW-0496">Mitochondrion</keyword>
<keyword id="KW-0547">Nucleotide-binding</keyword>
<keyword id="KW-1185">Reference proteome</keyword>
<keyword id="KW-0809">Transit peptide</keyword>
<proteinExistence type="evidence at protein level"/>
<sequence length="293" mass="32061">MERLLINTIWRSYATKLTGSQVKLMARGLPKKQPIIGVQDIIVVASGKGGVGKSTVAVNFACSLAKLGKRVGLLDGDIFGPTIPLLMNVHGEPVVNDKNLMIPPQNYNVKCLSMGMLTPVETSVIWRGPLVMSAIQRLLKGTDWGLLDVLVIDTPPGTGDVHLSLSQHAPITGVILVTTPHTAAVQVTLKGASMYEKLNVPIFGVVENMKYTICQNCNQRLEFFKDSRISSLPRKLISLPLDSRIADSNESGVPVVIKYPDSKYSYLFTQLAEEITQILNEQRCNQNQNNSAH</sequence>
<comment type="function">
    <text evidence="1 2 4">Iron-sulfur cluster transfer protein involved in the assembly of the mitochondrial membrane respiratory chain NADH dehydrogenase (Complex I) (PubMed:34950192). May deliver one or more Fe-S clusters to complex I subunits (By similarity). Alleviates pausing in mitochondrial DNA (mtDNA) replication at slow zone 2 (PubMed:34950192). May be involved in mtDNA-helicase-mediated mtDNA unwinding and replication by transferring iron-sulfur clusters (PubMed:34950192).</text>
</comment>
<comment type="cofactor">
    <cofactor>
        <name>[4Fe-4S] cluster</name>
        <dbReference type="ChEBI" id="CHEBI:49883"/>
    </cofactor>
    <text evidence="6">Binds 1 [4Fe-4S] cluster.</text>
</comment>
<comment type="subunit">
    <text evidence="2">Homodimer; dimerization is not reliant on iron-sulfur cluster binding.</text>
</comment>
<comment type="subcellular location">
    <subcellularLocation>
        <location evidence="2">Mitochondrion membrane</location>
        <topology evidence="2">Peripheral membrane protein</topology>
    </subcellularLocation>
</comment>
<comment type="alternative products">
    <event type="alternative splicing"/>
    <isoform>
        <id>Q9V9M8-1</id>
        <name evidence="9">D</name>
        <name evidence="9">E</name>
        <sequence type="displayed"/>
    </isoform>
    <isoform>
        <id>Q9V9M8-2</id>
        <name evidence="9">F</name>
        <sequence type="described" ref="VSP_062044"/>
    </isoform>
</comment>
<comment type="similarity">
    <text evidence="5">Belongs to the Mrp/NBP35 ATP-binding proteins family.</text>
</comment>
<dbReference type="EMBL" id="AE014134">
    <property type="protein sequence ID" value="AAF57258.3"/>
    <property type="molecule type" value="Genomic_DNA"/>
</dbReference>
<dbReference type="EMBL" id="AE014134">
    <property type="protein sequence ID" value="AAN11148.1"/>
    <property type="molecule type" value="Genomic_DNA"/>
</dbReference>
<dbReference type="EMBL" id="AE014134">
    <property type="protein sequence ID" value="AGB93223.1"/>
    <property type="molecule type" value="Genomic_DNA"/>
</dbReference>
<dbReference type="EMBL" id="AY070505">
    <property type="protein sequence ID" value="AAL47976.1"/>
    <property type="molecule type" value="mRNA"/>
</dbReference>
<dbReference type="EMBL" id="BT083452">
    <property type="protein sequence ID" value="ACR10184.1"/>
    <property type="molecule type" value="mRNA"/>
</dbReference>
<dbReference type="RefSeq" id="NP_001260688.1">
    <molecule id="Q9V9M8-1"/>
    <property type="nucleotide sequence ID" value="NM_001273759.1"/>
</dbReference>
<dbReference type="RefSeq" id="NP_610143.3">
    <molecule id="Q9V9M8-1"/>
    <property type="nucleotide sequence ID" value="NM_136299.5"/>
</dbReference>
<dbReference type="RefSeq" id="NP_724389.1">
    <molecule id="Q9V9M8-2"/>
    <property type="nucleotide sequence ID" value="NM_165412.3"/>
</dbReference>
<dbReference type="SMR" id="Q9V9M8"/>
<dbReference type="FunCoup" id="Q9V9M8">
    <property type="interactions" value="886"/>
</dbReference>
<dbReference type="IntAct" id="Q9V9M8">
    <property type="interactions" value="7"/>
</dbReference>
<dbReference type="STRING" id="7227.FBpp0306285"/>
<dbReference type="PaxDb" id="7227-FBpp0289153"/>
<dbReference type="DNASU" id="35452"/>
<dbReference type="EnsemblMetazoa" id="FBtr0299875">
    <molecule id="Q9V9M8-1"/>
    <property type="protein sequence ID" value="FBpp0289153"/>
    <property type="gene ID" value="FBgn0032986"/>
</dbReference>
<dbReference type="EnsemblMetazoa" id="FBtr0334168">
    <molecule id="Q9V9M8-1"/>
    <property type="protein sequence ID" value="FBpp0306285"/>
    <property type="gene ID" value="FBgn0032986"/>
</dbReference>
<dbReference type="EnsemblMetazoa" id="FBtr0334169">
    <molecule id="Q9V9M8-2"/>
    <property type="protein sequence ID" value="FBpp0306286"/>
    <property type="gene ID" value="FBgn0032986"/>
</dbReference>
<dbReference type="GeneID" id="35452"/>
<dbReference type="KEGG" id="dme:Dmel_CG3262"/>
<dbReference type="UCSC" id="CG3262-RC">
    <molecule id="Q9V9M8-1"/>
    <property type="organism name" value="d. melanogaster"/>
</dbReference>
<dbReference type="AGR" id="FB:FBgn0032986"/>
<dbReference type="CTD" id="80224"/>
<dbReference type="FlyBase" id="FBgn0032986">
    <property type="gene designation" value="Nubpl"/>
</dbReference>
<dbReference type="VEuPathDB" id="VectorBase:FBgn0032986"/>
<dbReference type="eggNOG" id="KOG3022">
    <property type="taxonomic scope" value="Eukaryota"/>
</dbReference>
<dbReference type="GeneTree" id="ENSGT00950000183193"/>
<dbReference type="HOGENOM" id="CLU_024839_0_2_1"/>
<dbReference type="InParanoid" id="Q9V9M8"/>
<dbReference type="OMA" id="ANFACSM"/>
<dbReference type="OrthoDB" id="1741334at2759"/>
<dbReference type="Reactome" id="R-DME-6799198">
    <property type="pathway name" value="Complex I biogenesis"/>
</dbReference>
<dbReference type="BioGRID-ORCS" id="35452">
    <property type="hits" value="0 hits in 1 CRISPR screen"/>
</dbReference>
<dbReference type="GenomeRNAi" id="35452"/>
<dbReference type="PRO" id="PR:Q9V9M8"/>
<dbReference type="Proteomes" id="UP000000803">
    <property type="component" value="Chromosome 2L"/>
</dbReference>
<dbReference type="Bgee" id="FBgn0032986">
    <property type="expression patterns" value="Expressed in antennal olfactory receptor neuron of basiconic sensillum in antenna and 273 other cell types or tissues"/>
</dbReference>
<dbReference type="ExpressionAtlas" id="Q9V9M8">
    <property type="expression patterns" value="baseline and differential"/>
</dbReference>
<dbReference type="GO" id="GO:0005743">
    <property type="term" value="C:mitochondrial inner membrane"/>
    <property type="evidence" value="ECO:0000305"/>
    <property type="project" value="FlyBase"/>
</dbReference>
<dbReference type="GO" id="GO:0005739">
    <property type="term" value="C:mitochondrion"/>
    <property type="evidence" value="ECO:0000314"/>
    <property type="project" value="FlyBase"/>
</dbReference>
<dbReference type="GO" id="GO:0051539">
    <property type="term" value="F:4 iron, 4 sulfur cluster binding"/>
    <property type="evidence" value="ECO:0000318"/>
    <property type="project" value="GO_Central"/>
</dbReference>
<dbReference type="GO" id="GO:0005524">
    <property type="term" value="F:ATP binding"/>
    <property type="evidence" value="ECO:0007669"/>
    <property type="project" value="UniProtKB-KW"/>
</dbReference>
<dbReference type="GO" id="GO:0140663">
    <property type="term" value="F:ATP-dependent FeS chaperone activity"/>
    <property type="evidence" value="ECO:0007669"/>
    <property type="project" value="InterPro"/>
</dbReference>
<dbReference type="GO" id="GO:0051536">
    <property type="term" value="F:iron-sulfur cluster binding"/>
    <property type="evidence" value="ECO:0000314"/>
    <property type="project" value="FlyBase"/>
</dbReference>
<dbReference type="GO" id="GO:0046872">
    <property type="term" value="F:metal ion binding"/>
    <property type="evidence" value="ECO:0007669"/>
    <property type="project" value="UniProtKB-KW"/>
</dbReference>
<dbReference type="GO" id="GO:0005543">
    <property type="term" value="F:phospholipid binding"/>
    <property type="evidence" value="ECO:0000314"/>
    <property type="project" value="FlyBase"/>
</dbReference>
<dbReference type="GO" id="GO:0016226">
    <property type="term" value="P:iron-sulfur cluster assembly"/>
    <property type="evidence" value="ECO:0000318"/>
    <property type="project" value="GO_Central"/>
</dbReference>
<dbReference type="GO" id="GO:0032981">
    <property type="term" value="P:mitochondrial respiratory chain complex I assembly"/>
    <property type="evidence" value="ECO:0000318"/>
    <property type="project" value="GO_Central"/>
</dbReference>
<dbReference type="CDD" id="cd02037">
    <property type="entry name" value="Mrp_NBP35"/>
    <property type="match status" value="1"/>
</dbReference>
<dbReference type="FunFam" id="3.40.50.300:FF:001278">
    <property type="entry name" value="Iron-sulfur cluster carrier protein"/>
    <property type="match status" value="1"/>
</dbReference>
<dbReference type="Gene3D" id="3.40.50.300">
    <property type="entry name" value="P-loop containing nucleotide triphosphate hydrolases"/>
    <property type="match status" value="1"/>
</dbReference>
<dbReference type="HAMAP" id="MF_02040">
    <property type="entry name" value="Mrp_NBP35"/>
    <property type="match status" value="1"/>
</dbReference>
<dbReference type="InterPro" id="IPR000808">
    <property type="entry name" value="Mrp-like_CS"/>
</dbReference>
<dbReference type="InterPro" id="IPR019591">
    <property type="entry name" value="Mrp/NBP35_ATP-bd"/>
</dbReference>
<dbReference type="InterPro" id="IPR044304">
    <property type="entry name" value="NUBPL-like"/>
</dbReference>
<dbReference type="InterPro" id="IPR027417">
    <property type="entry name" value="P-loop_NTPase"/>
</dbReference>
<dbReference type="InterPro" id="IPR033756">
    <property type="entry name" value="YlxH/NBP35"/>
</dbReference>
<dbReference type="PANTHER" id="PTHR42961">
    <property type="entry name" value="IRON-SULFUR PROTEIN NUBPL"/>
    <property type="match status" value="1"/>
</dbReference>
<dbReference type="PANTHER" id="PTHR42961:SF2">
    <property type="entry name" value="IRON-SULFUR PROTEIN NUBPL"/>
    <property type="match status" value="1"/>
</dbReference>
<dbReference type="Pfam" id="PF10609">
    <property type="entry name" value="ParA"/>
    <property type="match status" value="1"/>
</dbReference>
<dbReference type="SUPFAM" id="SSF52540">
    <property type="entry name" value="P-loop containing nucleoside triphosphate hydrolases"/>
    <property type="match status" value="1"/>
</dbReference>
<dbReference type="PROSITE" id="PS01215">
    <property type="entry name" value="MRP"/>
    <property type="match status" value="1"/>
</dbReference>
<accession>Q9V9M8</accession>
<accession>C4IY21</accession>
<accession>Q8SZU4</accession>
<feature type="transit peptide" description="Mitochondrion" evidence="5">
    <location>
        <begin position="1"/>
        <end status="unknown"/>
    </location>
</feature>
<feature type="chain" id="PRO_0000459127" description="Iron-sulfur cluster transfer protein Nubpl">
    <location>
        <begin status="unknown"/>
        <end position="293"/>
    </location>
</feature>
<feature type="region of interest" description="CXXC motif probably involved in coordinating iron-sulfur cluster binding" evidence="4">
    <location>
        <begin position="214"/>
        <end position="217"/>
    </location>
</feature>
<feature type="splice variant" id="VSP_062044" description="In isoform F.">
    <location>
        <begin position="1"/>
        <end position="86"/>
    </location>
</feature>
<feature type="mutagenesis site" description="Reduced protein stability. No effect on dimerization." evidence="2">
    <original>CQNC</original>
    <variation>AQNA</variation>
    <location>
        <begin position="214"/>
        <end position="217"/>
    </location>
</feature>
<organism evidence="10">
    <name type="scientific">Drosophila melanogaster</name>
    <name type="common">Fruit fly</name>
    <dbReference type="NCBI Taxonomy" id="7227"/>
    <lineage>
        <taxon>Eukaryota</taxon>
        <taxon>Metazoa</taxon>
        <taxon>Ecdysozoa</taxon>
        <taxon>Arthropoda</taxon>
        <taxon>Hexapoda</taxon>
        <taxon>Insecta</taxon>
        <taxon>Pterygota</taxon>
        <taxon>Neoptera</taxon>
        <taxon>Endopterygota</taxon>
        <taxon>Diptera</taxon>
        <taxon>Brachycera</taxon>
        <taxon>Muscomorpha</taxon>
        <taxon>Ephydroidea</taxon>
        <taxon>Drosophilidae</taxon>
        <taxon>Drosophila</taxon>
        <taxon>Sophophora</taxon>
    </lineage>
</organism>
<reference evidence="10" key="1">
    <citation type="journal article" date="2000" name="Science">
        <title>The genome sequence of Drosophila melanogaster.</title>
        <authorList>
            <person name="Adams M.D."/>
            <person name="Celniker S.E."/>
            <person name="Holt R.A."/>
            <person name="Evans C.A."/>
            <person name="Gocayne J.D."/>
            <person name="Amanatides P.G."/>
            <person name="Scherer S.E."/>
            <person name="Li P.W."/>
            <person name="Hoskins R.A."/>
            <person name="Galle R.F."/>
            <person name="George R.A."/>
            <person name="Lewis S.E."/>
            <person name="Richards S."/>
            <person name="Ashburner M."/>
            <person name="Henderson S.N."/>
            <person name="Sutton G.G."/>
            <person name="Wortman J.R."/>
            <person name="Yandell M.D."/>
            <person name="Zhang Q."/>
            <person name="Chen L.X."/>
            <person name="Brandon R.C."/>
            <person name="Rogers Y.-H.C."/>
            <person name="Blazej R.G."/>
            <person name="Champe M."/>
            <person name="Pfeiffer B.D."/>
            <person name="Wan K.H."/>
            <person name="Doyle C."/>
            <person name="Baxter E.G."/>
            <person name="Helt G."/>
            <person name="Nelson C.R."/>
            <person name="Miklos G.L.G."/>
            <person name="Abril J.F."/>
            <person name="Agbayani A."/>
            <person name="An H.-J."/>
            <person name="Andrews-Pfannkoch C."/>
            <person name="Baldwin D."/>
            <person name="Ballew R.M."/>
            <person name="Basu A."/>
            <person name="Baxendale J."/>
            <person name="Bayraktaroglu L."/>
            <person name="Beasley E.M."/>
            <person name="Beeson K.Y."/>
            <person name="Benos P.V."/>
            <person name="Berman B.P."/>
            <person name="Bhandari D."/>
            <person name="Bolshakov S."/>
            <person name="Borkova D."/>
            <person name="Botchan M.R."/>
            <person name="Bouck J."/>
            <person name="Brokstein P."/>
            <person name="Brottier P."/>
            <person name="Burtis K.C."/>
            <person name="Busam D.A."/>
            <person name="Butler H."/>
            <person name="Cadieu E."/>
            <person name="Center A."/>
            <person name="Chandra I."/>
            <person name="Cherry J.M."/>
            <person name="Cawley S."/>
            <person name="Dahlke C."/>
            <person name="Davenport L.B."/>
            <person name="Davies P."/>
            <person name="de Pablos B."/>
            <person name="Delcher A."/>
            <person name="Deng Z."/>
            <person name="Mays A.D."/>
            <person name="Dew I."/>
            <person name="Dietz S.M."/>
            <person name="Dodson K."/>
            <person name="Doup L.E."/>
            <person name="Downes M."/>
            <person name="Dugan-Rocha S."/>
            <person name="Dunkov B.C."/>
            <person name="Dunn P."/>
            <person name="Durbin K.J."/>
            <person name="Evangelista C.C."/>
            <person name="Ferraz C."/>
            <person name="Ferriera S."/>
            <person name="Fleischmann W."/>
            <person name="Fosler C."/>
            <person name="Gabrielian A.E."/>
            <person name="Garg N.S."/>
            <person name="Gelbart W.M."/>
            <person name="Glasser K."/>
            <person name="Glodek A."/>
            <person name="Gong F."/>
            <person name="Gorrell J.H."/>
            <person name="Gu Z."/>
            <person name="Guan P."/>
            <person name="Harris M."/>
            <person name="Harris N.L."/>
            <person name="Harvey D.A."/>
            <person name="Heiman T.J."/>
            <person name="Hernandez J.R."/>
            <person name="Houck J."/>
            <person name="Hostin D."/>
            <person name="Houston K.A."/>
            <person name="Howland T.J."/>
            <person name="Wei M.-H."/>
            <person name="Ibegwam C."/>
            <person name="Jalali M."/>
            <person name="Kalush F."/>
            <person name="Karpen G.H."/>
            <person name="Ke Z."/>
            <person name="Kennison J.A."/>
            <person name="Ketchum K.A."/>
            <person name="Kimmel B.E."/>
            <person name="Kodira C.D."/>
            <person name="Kraft C.L."/>
            <person name="Kravitz S."/>
            <person name="Kulp D."/>
            <person name="Lai Z."/>
            <person name="Lasko P."/>
            <person name="Lei Y."/>
            <person name="Levitsky A.A."/>
            <person name="Li J.H."/>
            <person name="Li Z."/>
            <person name="Liang Y."/>
            <person name="Lin X."/>
            <person name="Liu X."/>
            <person name="Mattei B."/>
            <person name="McIntosh T.C."/>
            <person name="McLeod M.P."/>
            <person name="McPherson D."/>
            <person name="Merkulov G."/>
            <person name="Milshina N.V."/>
            <person name="Mobarry C."/>
            <person name="Morris J."/>
            <person name="Moshrefi A."/>
            <person name="Mount S.M."/>
            <person name="Moy M."/>
            <person name="Murphy B."/>
            <person name="Murphy L."/>
            <person name="Muzny D.M."/>
            <person name="Nelson D.L."/>
            <person name="Nelson D.R."/>
            <person name="Nelson K.A."/>
            <person name="Nixon K."/>
            <person name="Nusskern D.R."/>
            <person name="Pacleb J.M."/>
            <person name="Palazzolo M."/>
            <person name="Pittman G.S."/>
            <person name="Pan S."/>
            <person name="Pollard J."/>
            <person name="Puri V."/>
            <person name="Reese M.G."/>
            <person name="Reinert K."/>
            <person name="Remington K."/>
            <person name="Saunders R.D.C."/>
            <person name="Scheeler F."/>
            <person name="Shen H."/>
            <person name="Shue B.C."/>
            <person name="Siden-Kiamos I."/>
            <person name="Simpson M."/>
            <person name="Skupski M.P."/>
            <person name="Smith T.J."/>
            <person name="Spier E."/>
            <person name="Spradling A.C."/>
            <person name="Stapleton M."/>
            <person name="Strong R."/>
            <person name="Sun E."/>
            <person name="Svirskas R."/>
            <person name="Tector C."/>
            <person name="Turner R."/>
            <person name="Venter E."/>
            <person name="Wang A.H."/>
            <person name="Wang X."/>
            <person name="Wang Z.-Y."/>
            <person name="Wassarman D.A."/>
            <person name="Weinstock G.M."/>
            <person name="Weissenbach J."/>
            <person name="Williams S.M."/>
            <person name="Woodage T."/>
            <person name="Worley K.C."/>
            <person name="Wu D."/>
            <person name="Yang S."/>
            <person name="Yao Q.A."/>
            <person name="Ye J."/>
            <person name="Yeh R.-F."/>
            <person name="Zaveri J.S."/>
            <person name="Zhan M."/>
            <person name="Zhang G."/>
            <person name="Zhao Q."/>
            <person name="Zheng L."/>
            <person name="Zheng X.H."/>
            <person name="Zhong F.N."/>
            <person name="Zhong W."/>
            <person name="Zhou X."/>
            <person name="Zhu S.C."/>
            <person name="Zhu X."/>
            <person name="Smith H.O."/>
            <person name="Gibbs R.A."/>
            <person name="Myers E.W."/>
            <person name="Rubin G.M."/>
            <person name="Venter J.C."/>
        </authorList>
    </citation>
    <scope>NUCLEOTIDE SEQUENCE [LARGE SCALE GENOMIC DNA]</scope>
    <source>
        <strain evidence="10">Berkeley</strain>
    </source>
</reference>
<reference evidence="10" key="2">
    <citation type="journal article" date="2002" name="Genome Biol.">
        <title>Annotation of the Drosophila melanogaster euchromatic genome: a systematic review.</title>
        <authorList>
            <person name="Misra S."/>
            <person name="Crosby M.A."/>
            <person name="Mungall C.J."/>
            <person name="Matthews B.B."/>
            <person name="Campbell K.S."/>
            <person name="Hradecky P."/>
            <person name="Huang Y."/>
            <person name="Kaminker J.S."/>
            <person name="Millburn G.H."/>
            <person name="Prochnik S.E."/>
            <person name="Smith C.D."/>
            <person name="Tupy J.L."/>
            <person name="Whitfield E.J."/>
            <person name="Bayraktaroglu L."/>
            <person name="Berman B.P."/>
            <person name="Bettencourt B.R."/>
            <person name="Celniker S.E."/>
            <person name="de Grey A.D.N.J."/>
            <person name="Drysdale R.A."/>
            <person name="Harris N.L."/>
            <person name="Richter J."/>
            <person name="Russo S."/>
            <person name="Schroeder A.J."/>
            <person name="Shu S.Q."/>
            <person name="Stapleton M."/>
            <person name="Yamada C."/>
            <person name="Ashburner M."/>
            <person name="Gelbart W.M."/>
            <person name="Rubin G.M."/>
            <person name="Lewis S.E."/>
        </authorList>
    </citation>
    <scope>GENOME REANNOTATION</scope>
    <source>
        <strain evidence="10">Berkeley</strain>
    </source>
</reference>
<reference evidence="7" key="3">
    <citation type="journal article" date="2002" name="Genome Biol.">
        <title>A Drosophila full-length cDNA resource.</title>
        <authorList>
            <person name="Stapleton M."/>
            <person name="Carlson J.W."/>
            <person name="Brokstein P."/>
            <person name="Yu C."/>
            <person name="Champe M."/>
            <person name="George R.A."/>
            <person name="Guarin H."/>
            <person name="Kronmiller B."/>
            <person name="Pacleb J.M."/>
            <person name="Park S."/>
            <person name="Wan K.H."/>
            <person name="Rubin G.M."/>
            <person name="Celniker S.E."/>
        </authorList>
    </citation>
    <scope>NUCLEOTIDE SEQUENCE [LARGE SCALE MRNA] (ISOFORM F)</scope>
    <source>
        <strain evidence="7">Berkeley</strain>
        <tissue evidence="7">Head</tissue>
    </source>
</reference>
<reference evidence="8" key="4">
    <citation type="submission" date="2009-05" db="EMBL/GenBank/DDBJ databases">
        <authorList>
            <person name="Carlson J."/>
            <person name="Booth B."/>
            <person name="Frise E."/>
            <person name="Park S."/>
            <person name="Wan K."/>
            <person name="Yu C."/>
            <person name="Celniker S."/>
        </authorList>
    </citation>
    <scope>NUCLEOTIDE SEQUENCE [LARGE SCALE MRNA] OF 27-293 (ISOFORM D)</scope>
    <source>
        <strain evidence="8">Berkeley</strain>
        <tissue evidence="8">Ovary</tissue>
    </source>
</reference>
<reference key="5">
    <citation type="journal article" date="2021" name="Front. Genet.">
        <title>Implications of Membrane Binding by the Fe-S Cluster-Containing N-Terminal Domain in the Drosophila Mitochondrial Replicative DNA Helicase.</title>
        <authorList>
            <person name="So M."/>
            <person name="Stiban J."/>
            <person name="Ciesielski G.L."/>
            <person name="Hovde S.L."/>
            <person name="Kaguni L.S."/>
        </authorList>
    </citation>
    <scope>FUNCTION</scope>
    <scope>COFACTOR</scope>
    <scope>SUBUNIT</scope>
    <scope>SUBCELLULAR LOCATION</scope>
    <scope>MUTAGENESIS OF 214-CYS--CYS-217</scope>
</reference>
<gene>
    <name evidence="3 9" type="primary">Nubpl</name>
    <name evidence="9" type="ORF">CG3262</name>
</gene>
<name>NUBPL_DROME</name>
<evidence type="ECO:0000250" key="1">
    <source>
        <dbReference type="UniProtKB" id="Q8TB37"/>
    </source>
</evidence>
<evidence type="ECO:0000269" key="2">
    <source>
    </source>
</evidence>
<evidence type="ECO:0000303" key="3">
    <source>
    </source>
</evidence>
<evidence type="ECO:0000303" key="4">
    <source>
    </source>
</evidence>
<evidence type="ECO:0000305" key="5"/>
<evidence type="ECO:0000305" key="6">
    <source>
    </source>
</evidence>
<evidence type="ECO:0000312" key="7">
    <source>
        <dbReference type="EMBL" id="AAL47976.1"/>
    </source>
</evidence>
<evidence type="ECO:0000312" key="8">
    <source>
        <dbReference type="EMBL" id="ACR10184.1"/>
    </source>
</evidence>
<evidence type="ECO:0000312" key="9">
    <source>
        <dbReference type="FlyBase" id="FBgn0032986"/>
    </source>
</evidence>
<evidence type="ECO:0000312" key="10">
    <source>
        <dbReference type="Proteomes" id="UP000000803"/>
    </source>
</evidence>
<protein>
    <recommendedName>
        <fullName evidence="4">Iron-sulfur cluster transfer protein Nubpl</fullName>
    </recommendedName>
    <alternativeName>
        <fullName evidence="5">Nucleotide binding protein-like</fullName>
    </alternativeName>
</protein>